<organism>
    <name type="scientific">Francisella tularensis subsp. holarctica (strain LVS)</name>
    <dbReference type="NCBI Taxonomy" id="376619"/>
    <lineage>
        <taxon>Bacteria</taxon>
        <taxon>Pseudomonadati</taxon>
        <taxon>Pseudomonadota</taxon>
        <taxon>Gammaproteobacteria</taxon>
        <taxon>Thiotrichales</taxon>
        <taxon>Francisellaceae</taxon>
        <taxon>Francisella</taxon>
    </lineage>
</organism>
<comment type="subcellular location">
    <subcellularLocation>
        <location>Cell outer membrane</location>
        <topology>Lipid-anchor</topology>
    </subcellularLocation>
</comment>
<dbReference type="EMBL" id="M32059">
    <property type="protein sequence ID" value="AAA24919.1"/>
    <property type="molecule type" value="Genomic_DNA"/>
</dbReference>
<dbReference type="EMBL" id="AM233362">
    <property type="protein sequence ID" value="CAJ78861.1"/>
    <property type="molecule type" value="Genomic_DNA"/>
</dbReference>
<dbReference type="PIR" id="B37169">
    <property type="entry name" value="B37169"/>
</dbReference>
<dbReference type="KEGG" id="ftl:FTL_0421"/>
<dbReference type="Proteomes" id="UP000001944">
    <property type="component" value="Chromosome"/>
</dbReference>
<dbReference type="GO" id="GO:0009279">
    <property type="term" value="C:cell outer membrane"/>
    <property type="evidence" value="ECO:0007669"/>
    <property type="project" value="UniProtKB-SubCell"/>
</dbReference>
<dbReference type="CDD" id="cd00063">
    <property type="entry name" value="FN3"/>
    <property type="match status" value="1"/>
</dbReference>
<dbReference type="InterPro" id="IPR003961">
    <property type="entry name" value="FN3_dom"/>
</dbReference>
<dbReference type="NCBIfam" id="NF038367">
    <property type="entry name" value="OM_lipo_TUL4"/>
    <property type="match status" value="1"/>
</dbReference>
<dbReference type="PROSITE" id="PS51257">
    <property type="entry name" value="PROKAR_LIPOPROTEIN"/>
    <property type="match status" value="1"/>
</dbReference>
<protein>
    <recommendedName>
        <fullName>17 kDa major membrane protein</fullName>
    </recommendedName>
    <alternativeName>
        <fullName>TUL4</fullName>
    </alternativeName>
</protein>
<sequence length="149" mass="15772">MKKIIKLSLLSLSIAGLASCSTLGLGGSDDAKASAKDTAAAQTATTEQAAAVSKPTAKVSLNKLGQDKIKATVYTAYNNNPQGSVRLQWQAPEGSKCHDTSFPITKYAEKNDKTWATVTVKQGNNFCSGKWTANVVYDKEVIASDSINI</sequence>
<name>MP17_FRATH</name>
<evidence type="ECO:0000305" key="1"/>
<accession>P18149</accession>
<accession>Q2A508</accession>
<keyword id="KW-0998">Cell outer membrane</keyword>
<keyword id="KW-0449">Lipoprotein</keyword>
<keyword id="KW-0472">Membrane</keyword>
<keyword id="KW-0564">Palmitate</keyword>
<keyword id="KW-1185">Reference proteome</keyword>
<keyword id="KW-0732">Signal</keyword>
<proteinExistence type="predicted"/>
<reference key="1">
    <citation type="journal article" date="1990" name="J. Immunol.">
        <title>Nucleotide sequence and T cell epitopes of a membrane protein of Francisella tularensis.</title>
        <authorList>
            <person name="Sjoestedt A."/>
            <person name="Sandstroem G."/>
            <person name="Taernvik A."/>
            <person name="Jaurin B."/>
        </authorList>
    </citation>
    <scope>NUCLEOTIDE SEQUENCE [GENOMIC DNA]</scope>
</reference>
<reference key="2">
    <citation type="submission" date="2006-03" db="EMBL/GenBank/DDBJ databases">
        <title>Complete genome sequence of Francisella tularensis LVS (Live Vaccine Strain).</title>
        <authorList>
            <person name="Chain P."/>
            <person name="Larimer F."/>
            <person name="Land M."/>
            <person name="Stilwagen S."/>
            <person name="Larsson P."/>
            <person name="Bearden S."/>
            <person name="Chu M."/>
            <person name="Oyston P."/>
            <person name="Forsman M."/>
            <person name="Andersson S."/>
            <person name="Lindler L."/>
            <person name="Titball R."/>
            <person name="Garcia E."/>
        </authorList>
    </citation>
    <scope>NUCLEOTIDE SEQUENCE [LARGE SCALE GENOMIC DNA]</scope>
    <source>
        <strain>LVS</strain>
    </source>
</reference>
<feature type="signal peptide" evidence="1">
    <location>
        <begin position="1"/>
        <end position="19"/>
    </location>
</feature>
<feature type="chain" id="PRO_0000018153" description="17 kDa major membrane protein">
    <location>
        <begin position="20"/>
        <end position="149"/>
    </location>
</feature>
<feature type="lipid moiety-binding region" description="N-palmitoyl cysteine" evidence="1">
    <location>
        <position position="20"/>
    </location>
</feature>
<feature type="lipid moiety-binding region" description="S-diacylglycerol cysteine" evidence="1">
    <location>
        <position position="20"/>
    </location>
</feature>
<gene>
    <name type="ordered locus">FTL_0421</name>
</gene>